<proteinExistence type="inferred from homology"/>
<organism>
    <name type="scientific">Influenza A virus (strain A/Chicken/Hong Kong/220/1997 H5N1 genotype Gs/Gd)</name>
    <dbReference type="NCBI Taxonomy" id="100834"/>
    <lineage>
        <taxon>Viruses</taxon>
        <taxon>Riboviria</taxon>
        <taxon>Orthornavirae</taxon>
        <taxon>Negarnaviricota</taxon>
        <taxon>Polyploviricotina</taxon>
        <taxon>Insthoviricetes</taxon>
        <taxon>Articulavirales</taxon>
        <taxon>Orthomyxoviridae</taxon>
        <taxon>Alphainfluenzavirus</taxon>
        <taxon>Alphainfluenzavirus influenzae</taxon>
        <taxon>Influenza A virus</taxon>
    </lineage>
</organism>
<comment type="function">
    <text evidence="1">Binds to sialic acid-containing receptors on the cell surface, bringing about the attachment of the virus particle to the cell. This attachment induces virion internalization either through clathrin-dependent endocytosis or through clathrin- and caveolin-independent pathway. Plays a major role in the determination of host range restriction and virulence. Class I viral fusion protein. Responsible for penetration of the virus into the cell cytoplasm by mediating the fusion of the membrane of the endocytosed virus particle with the endosomal membrane. Low pH in endosomes induces an irreversible conformational change in HA2, releasing the fusion hydrophobic peptide. Several trimers are required to form a competent fusion pore.</text>
</comment>
<comment type="subunit">
    <text evidence="1">Homotrimer of disulfide-linked HA1-HA2.</text>
</comment>
<comment type="subcellular location">
    <subcellularLocation>
        <location evidence="1">Virion membrane</location>
        <topology evidence="1">Single-pass type I membrane protein</topology>
    </subcellularLocation>
    <subcellularLocation>
        <location evidence="1">Host apical cell membrane</location>
        <topology evidence="1">Single-pass type I membrane protein</topology>
    </subcellularLocation>
    <text evidence="1">Targeted to the apical plasma membrane in epithelial polarized cells through a signal present in the transmembrane domain. Associated with glycosphingolipid- and cholesterol-enriched detergent-resistant lipid rafts.</text>
</comment>
<comment type="PTM">
    <text evidence="1">Palmitoylated.</text>
</comment>
<comment type="PTM">
    <text evidence="1">In natural infection, inactive HA is matured into HA1 and HA2 outside the cell by one or more trypsin-like, arginine-specific endoprotease secreted by the bronchial epithelial cells. One identified protease that may be involved in this process is secreted in lungs by club cells.</text>
</comment>
<comment type="miscellaneous">
    <text>Major glycoprotein, comprises over 80% of the envelope proteins present in virus particle.</text>
</comment>
<comment type="miscellaneous">
    <text>The extent of infection into host organism is determined by HA. Influenza viruses bud from the apical surface of polarized epithelial cells (e.g. bronchial epithelial cells) into lumen of lungs and are therefore usually pneumotropic. The reason is that HA is cleaved by tryptase clara which is restricted to lungs. However, HAs of H5 and H7 pantropic avian viruses subtypes can be cleaved by furin and subtilisin-type enzymes, allowing the virus to grow in other organs than lungs.</text>
</comment>
<comment type="miscellaneous">
    <text evidence="2">The influenza A genome consist of 8 RNA segments. Genetic variation of hemagglutinin and/or neuraminidase genes results in the emergence of new influenza strains. The mechanism of variation can be the result of point mutations or the result of genetic reassortment between segments of two different strains.</text>
</comment>
<comment type="similarity">
    <text evidence="1">Belongs to the influenza viruses hemagglutinin family.</text>
</comment>
<sequence length="568" mass="64349">MEKIVLLLATVSLVKSDQICIGYHANNSTEQVDTIMEKNVTVTHAQDILERTHNGKLCDLNGVKPLILRDCSVAGWLLGNPMCDEFINVPEWSYIVEKASPANDLCYPGNFNDYEELKHLLSRINHFEKIQIIPKSSWSNHDASSGVSSACPYLGRSSFFRNVVWLIKKNSTYPTIKRSYNNTNQEDLLVLWGIHHPNDAAEQTKLYQNPTTYISVGTSTLNQRLVPEIATRPKVNGQSGRMEFFWTILKPNDAINFESNGNFIAPEYAYKIVKKGDSTIMKSELEYGNCNTKCQTPMGAINSSMPFHNIHPLTIGECPKYVKSNRLVLATGLRNTPQRERRRKKRGLFGAIAGFIEGGWQGMVDGWYGYHHSNEQGSGYAADQESTQKAIDGVTNKVNSIINKMNTQFEAVGREFNNLERRIENLNKKMEDGFLDVWTYNTELLVLMENERTLDFHDSNVKNLYDKVRLQLRDNAKELGNGCFEFYHKCDNECMESVKNGTYDYPQYSEEARLNREEISGVKLESMGTYQILSIYSTVASSLALAIMVAGLSLWMCSNGSLQCRICI</sequence>
<name>HEMA_I97A0</name>
<feature type="signal peptide" evidence="1">
    <location>
        <begin position="1"/>
        <end position="16"/>
    </location>
</feature>
<feature type="chain" id="PRO_0000440540" description="Hemagglutinin" evidence="1">
    <location>
        <begin position="17"/>
        <end position="568"/>
    </location>
</feature>
<feature type="chain" id="PRO_0000440541" description="Hemagglutinin HA1 chain" evidence="1">
    <location>
        <begin position="17"/>
        <end position="345"/>
    </location>
</feature>
<feature type="chain" id="PRO_0000280184" description="Hemagglutinin HA2 chain" evidence="1">
    <location>
        <begin position="347"/>
        <end position="568"/>
    </location>
</feature>
<feature type="topological domain" description="Extracellular" evidence="1">
    <location>
        <begin position="17"/>
        <end position="531"/>
    </location>
</feature>
<feature type="transmembrane region" description="Helical" evidence="1">
    <location>
        <begin position="532"/>
        <end position="552"/>
    </location>
</feature>
<feature type="topological domain" description="Cytoplasmic" evidence="1">
    <location>
        <begin position="553"/>
        <end position="568"/>
    </location>
</feature>
<feature type="site" description="Cleavage; by host" evidence="1">
    <location>
        <begin position="346"/>
        <end position="347"/>
    </location>
</feature>
<feature type="lipid moiety-binding region" description="S-palmitoyl cysteine; by host" evidence="1">
    <location>
        <position position="557"/>
    </location>
</feature>
<feature type="lipid moiety-binding region" description="S-palmitoyl cysteine; by host" evidence="1">
    <location>
        <position position="564"/>
    </location>
</feature>
<feature type="lipid moiety-binding region" description="S-palmitoyl cysteine; by host" evidence="1">
    <location>
        <position position="567"/>
    </location>
</feature>
<feature type="glycosylation site" description="N-linked (GlcNAc...) asparagine; by host" evidence="1">
    <location>
        <position position="26"/>
    </location>
</feature>
<feature type="glycosylation site" description="N-linked (GlcNAc...) asparagine; by host" evidence="1">
    <location>
        <position position="27"/>
    </location>
</feature>
<feature type="glycosylation site" description="N-linked (GlcNAc...) asparagine; by host" evidence="1">
    <location>
        <position position="39"/>
    </location>
</feature>
<feature type="glycosylation site" description="N-linked (GlcNAc...) asparagine; by host" evidence="1">
    <location>
        <position position="170"/>
    </location>
</feature>
<feature type="glycosylation site" description="N-linked (GlcNAc...) asparagine; by host" evidence="1">
    <location>
        <position position="181"/>
    </location>
</feature>
<feature type="glycosylation site" description="N-linked (GlcNAc...) asparagine; by host" evidence="1">
    <location>
        <position position="302"/>
    </location>
</feature>
<feature type="glycosylation site" description="N-linked (GlcNAc...) asparagine; by host" evidence="1">
    <location>
        <position position="500"/>
    </location>
</feature>
<feature type="disulfide bond" description="Interchain (between HA1 and HA2 chains)" evidence="1">
    <location>
        <begin position="20"/>
        <end position="483"/>
    </location>
</feature>
<feature type="disulfide bond" evidence="1">
    <location>
        <begin position="58"/>
        <end position="290"/>
    </location>
</feature>
<feature type="disulfide bond" evidence="1">
    <location>
        <begin position="71"/>
        <end position="83"/>
    </location>
</feature>
<feature type="disulfide bond" evidence="1">
    <location>
        <begin position="106"/>
        <end position="151"/>
    </location>
</feature>
<feature type="disulfide bond" evidence="1">
    <location>
        <begin position="294"/>
        <end position="318"/>
    </location>
</feature>
<feature type="disulfide bond" evidence="1">
    <location>
        <begin position="490"/>
        <end position="494"/>
    </location>
</feature>
<accession>O89746</accession>
<gene>
    <name evidence="1" type="primary">HA</name>
</gene>
<protein>
    <recommendedName>
        <fullName evidence="1">Hemagglutinin</fullName>
    </recommendedName>
    <component>
        <recommendedName>
            <fullName evidence="1">Hemagglutinin HA1 chain</fullName>
        </recommendedName>
    </component>
    <component>
        <recommendedName>
            <fullName evidence="1">Hemagglutinin HA2 chain</fullName>
        </recommendedName>
    </component>
</protein>
<evidence type="ECO:0000255" key="1">
    <source>
        <dbReference type="HAMAP-Rule" id="MF_04072"/>
    </source>
</evidence>
<evidence type="ECO:0000305" key="2"/>
<keyword id="KW-1167">Clathrin- and caveolin-independent endocytosis of virus by host</keyword>
<keyword id="KW-1165">Clathrin-mediated endocytosis of virus by host</keyword>
<keyword id="KW-1015">Disulfide bond</keyword>
<keyword id="KW-1170">Fusion of virus membrane with host endosomal membrane</keyword>
<keyword id="KW-1168">Fusion of virus membrane with host membrane</keyword>
<keyword id="KW-0325">Glycoprotein</keyword>
<keyword id="KW-0348">Hemagglutinin</keyword>
<keyword id="KW-1032">Host cell membrane</keyword>
<keyword id="KW-1043">Host membrane</keyword>
<keyword id="KW-0945">Host-virus interaction</keyword>
<keyword id="KW-0449">Lipoprotein</keyword>
<keyword id="KW-0472">Membrane</keyword>
<keyword id="KW-0564">Palmitate</keyword>
<keyword id="KW-0732">Signal</keyword>
<keyword id="KW-0812">Transmembrane</keyword>
<keyword id="KW-1133">Transmembrane helix</keyword>
<keyword id="KW-1161">Viral attachment to host cell</keyword>
<keyword id="KW-0261">Viral envelope protein</keyword>
<keyword id="KW-1162">Viral penetration into host cytoplasm</keyword>
<keyword id="KW-0946">Virion</keyword>
<keyword id="KW-1164">Virus endocytosis by host</keyword>
<keyword id="KW-1160">Virus entry into host cell</keyword>
<dbReference type="EMBL" id="AF046080">
    <property type="protein sequence ID" value="AAC32078.1"/>
    <property type="molecule type" value="Genomic_RNA"/>
</dbReference>
<dbReference type="SMR" id="O89746"/>
<dbReference type="GlyCosmos" id="O89746">
    <property type="glycosylation" value="7 sites, No reported glycans"/>
</dbReference>
<dbReference type="GO" id="GO:0020002">
    <property type="term" value="C:host cell plasma membrane"/>
    <property type="evidence" value="ECO:0007669"/>
    <property type="project" value="UniProtKB-SubCell"/>
</dbReference>
<dbReference type="GO" id="GO:0016020">
    <property type="term" value="C:membrane"/>
    <property type="evidence" value="ECO:0007669"/>
    <property type="project" value="UniProtKB-UniRule"/>
</dbReference>
<dbReference type="GO" id="GO:0019031">
    <property type="term" value="C:viral envelope"/>
    <property type="evidence" value="ECO:0007669"/>
    <property type="project" value="UniProtKB-UniRule"/>
</dbReference>
<dbReference type="GO" id="GO:0055036">
    <property type="term" value="C:virion membrane"/>
    <property type="evidence" value="ECO:0007669"/>
    <property type="project" value="UniProtKB-SubCell"/>
</dbReference>
<dbReference type="GO" id="GO:0046789">
    <property type="term" value="F:host cell surface receptor binding"/>
    <property type="evidence" value="ECO:0007669"/>
    <property type="project" value="UniProtKB-UniRule"/>
</dbReference>
<dbReference type="GO" id="GO:0075512">
    <property type="term" value="P:clathrin-dependent endocytosis of virus by host cell"/>
    <property type="evidence" value="ECO:0007669"/>
    <property type="project" value="UniProtKB-UniRule"/>
</dbReference>
<dbReference type="GO" id="GO:0039654">
    <property type="term" value="P:fusion of virus membrane with host endosome membrane"/>
    <property type="evidence" value="ECO:0007669"/>
    <property type="project" value="UniProtKB-UniRule"/>
</dbReference>
<dbReference type="GO" id="GO:0019064">
    <property type="term" value="P:fusion of virus membrane with host plasma membrane"/>
    <property type="evidence" value="ECO:0007669"/>
    <property type="project" value="InterPro"/>
</dbReference>
<dbReference type="GO" id="GO:0046761">
    <property type="term" value="P:viral budding from plasma membrane"/>
    <property type="evidence" value="ECO:0007669"/>
    <property type="project" value="UniProtKB-UniRule"/>
</dbReference>
<dbReference type="GO" id="GO:0019062">
    <property type="term" value="P:virion attachment to host cell"/>
    <property type="evidence" value="ECO:0007669"/>
    <property type="project" value="UniProtKB-KW"/>
</dbReference>
<dbReference type="FunFam" id="3.90.209.20:FF:000001">
    <property type="entry name" value="Hemagglutinin"/>
    <property type="match status" value="1"/>
</dbReference>
<dbReference type="Gene3D" id="3.90.20.10">
    <property type="match status" value="1"/>
</dbReference>
<dbReference type="Gene3D" id="3.90.209.20">
    <property type="match status" value="1"/>
</dbReference>
<dbReference type="Gene3D" id="2.10.77.10">
    <property type="entry name" value="Hemagglutinin Chain A, Domain 2"/>
    <property type="match status" value="1"/>
</dbReference>
<dbReference type="HAMAP" id="MF_04072">
    <property type="entry name" value="INFV_HEMA"/>
    <property type="match status" value="1"/>
</dbReference>
<dbReference type="InterPro" id="IPR008980">
    <property type="entry name" value="Capsid_hemagglutn"/>
</dbReference>
<dbReference type="InterPro" id="IPR013828">
    <property type="entry name" value="Hemagglutn_HA1_a/b_dom_sf"/>
</dbReference>
<dbReference type="InterPro" id="IPR000149">
    <property type="entry name" value="Hemagglutn_influenz_A"/>
</dbReference>
<dbReference type="InterPro" id="IPR001364">
    <property type="entry name" value="Hemagglutn_influenz_A/B"/>
</dbReference>
<dbReference type="Pfam" id="PF00509">
    <property type="entry name" value="Hemagglutinin"/>
    <property type="match status" value="1"/>
</dbReference>
<dbReference type="PRINTS" id="PR00330">
    <property type="entry name" value="HEMAGGLUTN1"/>
</dbReference>
<dbReference type="PRINTS" id="PR00329">
    <property type="entry name" value="HEMAGGLUTN12"/>
</dbReference>
<dbReference type="SUPFAM" id="SSF58064">
    <property type="entry name" value="Influenza hemagglutinin (stalk)"/>
    <property type="match status" value="1"/>
</dbReference>
<dbReference type="SUPFAM" id="SSF49818">
    <property type="entry name" value="Viral protein domain"/>
    <property type="match status" value="1"/>
</dbReference>
<organismHost>
    <name type="scientific">Aves</name>
    <dbReference type="NCBI Taxonomy" id="8782"/>
</organismHost>
<organismHost>
    <name type="scientific">Felis catus</name>
    <name type="common">Cat</name>
    <name type="synonym">Felis silvestris catus</name>
    <dbReference type="NCBI Taxonomy" id="9685"/>
</organismHost>
<organismHost>
    <name type="scientific">Homo sapiens</name>
    <name type="common">Human</name>
    <dbReference type="NCBI Taxonomy" id="9606"/>
</organismHost>
<organismHost>
    <name type="scientific">Panthera pardus</name>
    <name type="common">Leopard</name>
    <name type="synonym">Felis pardus</name>
    <dbReference type="NCBI Taxonomy" id="9691"/>
</organismHost>
<organismHost>
    <name type="scientific">Panthera tigris</name>
    <name type="common">Tiger</name>
    <dbReference type="NCBI Taxonomy" id="9694"/>
</organismHost>
<organismHost>
    <name type="scientific">Sus scrofa</name>
    <name type="common">Pig</name>
    <dbReference type="NCBI Taxonomy" id="9823"/>
</organismHost>
<reference key="1">
    <citation type="journal article" date="1998" name="J. Virol.">
        <title>Comparisons of highly virulent H5N1 influenza A viruses isolated from humans and chickens from Hong Kong.</title>
        <authorList>
            <person name="Suarez D.L."/>
            <person name="Perdue M.L."/>
            <person name="Cox N."/>
            <person name="Rowe T."/>
            <person name="Bender C."/>
            <person name="Huang J."/>
            <person name="Swayne D.E."/>
        </authorList>
    </citation>
    <scope>NUCLEOTIDE SEQUENCE [GENOMIC RNA]</scope>
</reference>